<keyword id="KW-0067">ATP-binding</keyword>
<keyword id="KW-1003">Cell membrane</keyword>
<keyword id="KW-0966">Cell projection</keyword>
<keyword id="KW-0175">Coiled coil</keyword>
<keyword id="KW-0963">Cytoplasm</keyword>
<keyword id="KW-0206">Cytoskeleton</keyword>
<keyword id="KW-0903">Direct protein sequencing</keyword>
<keyword id="KW-0333">Golgi apparatus</keyword>
<keyword id="KW-0418">Kinase</keyword>
<keyword id="KW-0460">Magnesium</keyword>
<keyword id="KW-0472">Membrane</keyword>
<keyword id="KW-0547">Nucleotide-binding</keyword>
<keyword id="KW-1185">Reference proteome</keyword>
<keyword id="KW-0723">Serine/threonine-protein kinase</keyword>
<keyword id="KW-0808">Transferase</keyword>
<accession>Q8MIT6</accession>
<protein>
    <recommendedName>
        <fullName>Rho-associated protein kinase 1</fullName>
        <ecNumber evidence="3">2.7.11.1</ecNumber>
    </recommendedName>
    <alternativeName>
        <fullName>Rho-associated, coiled-coil-containing protein kinase 1</fullName>
    </alternativeName>
    <alternativeName>
        <fullName>Rho-associated, coiled-coil-containing protein kinase I</fullName>
        <shortName>ROCK-I</shortName>
    </alternativeName>
    <alternativeName>
        <fullName>p160 ROCK-1</fullName>
        <shortName>p160ROCK</shortName>
    </alternativeName>
</protein>
<organism>
    <name type="scientific">Bos taurus</name>
    <name type="common">Bovine</name>
    <dbReference type="NCBI Taxonomy" id="9913"/>
    <lineage>
        <taxon>Eukaryota</taxon>
        <taxon>Metazoa</taxon>
        <taxon>Chordata</taxon>
        <taxon>Craniata</taxon>
        <taxon>Vertebrata</taxon>
        <taxon>Euteleostomi</taxon>
        <taxon>Mammalia</taxon>
        <taxon>Eutheria</taxon>
        <taxon>Laurasiatheria</taxon>
        <taxon>Artiodactyla</taxon>
        <taxon>Ruminantia</taxon>
        <taxon>Pecora</taxon>
        <taxon>Bovidae</taxon>
        <taxon>Bovinae</taxon>
        <taxon>Bos</taxon>
    </lineage>
</organism>
<sequence>NSKSQMDKDYYQLQAVLEAERRDRGHDSEKIGDLQARITSLQEEVKHLKHNLERVEGERKEAQDMLNHSEKEKNNLEIDLNYKLKSLQQRLEQEVNEHKVTKARLTDKHQSIEEAKSVAMCEMEKKLKEERDAREKAENRVVQIEKQCSMLDVDLKQSQQKLEHLIENKDRMEDEVKNLTLQLEQESNKRLLLQNELKTQAFEADNLKGLEKQMKQEINTLLEAKRLLEFELAQLTKQYRGNEGQMRELQDQLEAEQYFSTLYKTQVKELKEEIEEKNRENLKKIQELQSEKETLATQLDLAETKAESEQLARGLLEEQYFELTQESKKAASRNRQEITDKDHTLSRLEETNSMLTKDIELLRKENEELTDKMRKAEEEYKLKKEEEINILKAAFEKNINTERTLKTQAVNKLAEIMNRKDFKIDRKKANTQDLRKKKKKK</sequence>
<feature type="chain" id="PRO_0000086618" description="Rho-associated protein kinase 1">
    <location>
        <begin position="1" status="less than"/>
        <end position="441" status="greater than"/>
    </location>
</feature>
<feature type="domain" description="RhoBD" evidence="5">
    <location>
        <begin position="356"/>
        <end position="422"/>
    </location>
</feature>
<feature type="region of interest" description="SHROOM3 binding" evidence="3">
    <location>
        <begin position="114"/>
        <end position="353"/>
    </location>
</feature>
<feature type="coiled-coil region" evidence="4">
    <location>
        <begin position="1" status="less than"/>
        <end position="99"/>
    </location>
</feature>
<feature type="coiled-coil region" evidence="4">
    <location>
        <begin position="418"/>
        <end position="441" status="greater than"/>
    </location>
</feature>
<feature type="non-terminal residue">
    <location>
        <position position="1"/>
    </location>
</feature>
<feature type="non-terminal residue">
    <location>
        <position position="441"/>
    </location>
</feature>
<dbReference type="EC" id="2.7.11.1" evidence="3"/>
<dbReference type="EMBL" id="AY052529">
    <property type="protein sequence ID" value="AAL13430.1"/>
    <property type="molecule type" value="mRNA"/>
</dbReference>
<dbReference type="SMR" id="Q8MIT6"/>
<dbReference type="FunCoup" id="Q8MIT6">
    <property type="interactions" value="76"/>
</dbReference>
<dbReference type="STRING" id="9913.ENSBTAP00000053818"/>
<dbReference type="PaxDb" id="9913-ENSBTAP00000053818"/>
<dbReference type="eggNOG" id="KOG0612">
    <property type="taxonomic scope" value="Eukaryota"/>
</dbReference>
<dbReference type="InParanoid" id="Q8MIT6"/>
<dbReference type="OrthoDB" id="3638488at2759"/>
<dbReference type="Proteomes" id="UP000009136">
    <property type="component" value="Unplaced"/>
</dbReference>
<dbReference type="GO" id="GO:0032059">
    <property type="term" value="C:bleb"/>
    <property type="evidence" value="ECO:0007669"/>
    <property type="project" value="UniProtKB-SubCell"/>
</dbReference>
<dbReference type="GO" id="GO:0005814">
    <property type="term" value="C:centriole"/>
    <property type="evidence" value="ECO:0007669"/>
    <property type="project" value="UniProtKB-SubCell"/>
</dbReference>
<dbReference type="GO" id="GO:0005737">
    <property type="term" value="C:cytoplasm"/>
    <property type="evidence" value="ECO:0000314"/>
    <property type="project" value="AgBase"/>
</dbReference>
<dbReference type="GO" id="GO:0010494">
    <property type="term" value="C:cytoplasmic stress granule"/>
    <property type="evidence" value="ECO:0000318"/>
    <property type="project" value="GO_Central"/>
</dbReference>
<dbReference type="GO" id="GO:0005856">
    <property type="term" value="C:cytoskeleton"/>
    <property type="evidence" value="ECO:0000318"/>
    <property type="project" value="GO_Central"/>
</dbReference>
<dbReference type="GO" id="GO:0000139">
    <property type="term" value="C:Golgi membrane"/>
    <property type="evidence" value="ECO:0007669"/>
    <property type="project" value="UniProtKB-SubCell"/>
</dbReference>
<dbReference type="GO" id="GO:0030027">
    <property type="term" value="C:lamellipodium"/>
    <property type="evidence" value="ECO:0007669"/>
    <property type="project" value="UniProtKB-SubCell"/>
</dbReference>
<dbReference type="GO" id="GO:0005886">
    <property type="term" value="C:plasma membrane"/>
    <property type="evidence" value="ECO:0007669"/>
    <property type="project" value="UniProtKB-SubCell"/>
</dbReference>
<dbReference type="GO" id="GO:0001726">
    <property type="term" value="C:ruffle"/>
    <property type="evidence" value="ECO:0007669"/>
    <property type="project" value="UniProtKB-SubCell"/>
</dbReference>
<dbReference type="GO" id="GO:0005524">
    <property type="term" value="F:ATP binding"/>
    <property type="evidence" value="ECO:0007669"/>
    <property type="project" value="UniProtKB-KW"/>
</dbReference>
<dbReference type="GO" id="GO:0106310">
    <property type="term" value="F:protein serine kinase activity"/>
    <property type="evidence" value="ECO:0007669"/>
    <property type="project" value="RHEA"/>
</dbReference>
<dbReference type="GO" id="GO:0004674">
    <property type="term" value="F:protein serine/threonine kinase activity"/>
    <property type="evidence" value="ECO:0000250"/>
    <property type="project" value="UniProtKB"/>
</dbReference>
<dbReference type="GO" id="GO:0072518">
    <property type="term" value="F:Rho-dependent protein serine/threonine kinase activity"/>
    <property type="evidence" value="ECO:0000318"/>
    <property type="project" value="GO_Central"/>
</dbReference>
<dbReference type="GO" id="GO:0031267">
    <property type="term" value="F:small GTPase binding"/>
    <property type="evidence" value="ECO:0007669"/>
    <property type="project" value="InterPro"/>
</dbReference>
<dbReference type="GO" id="GO:0030036">
    <property type="term" value="P:actin cytoskeleton organization"/>
    <property type="evidence" value="ECO:0000315"/>
    <property type="project" value="AgBase"/>
</dbReference>
<dbReference type="GO" id="GO:0031032">
    <property type="term" value="P:actomyosin structure organization"/>
    <property type="evidence" value="ECO:0000318"/>
    <property type="project" value="GO_Central"/>
</dbReference>
<dbReference type="GO" id="GO:0030866">
    <property type="term" value="P:cortical actin cytoskeleton organization"/>
    <property type="evidence" value="ECO:0000318"/>
    <property type="project" value="GO_Central"/>
</dbReference>
<dbReference type="GO" id="GO:0048598">
    <property type="term" value="P:embryonic morphogenesis"/>
    <property type="evidence" value="ECO:0000318"/>
    <property type="project" value="GO_Central"/>
</dbReference>
<dbReference type="GO" id="GO:0000281">
    <property type="term" value="P:mitotic cytokinesis"/>
    <property type="evidence" value="ECO:0000318"/>
    <property type="project" value="GO_Central"/>
</dbReference>
<dbReference type="GO" id="GO:0051451">
    <property type="term" value="P:myoblast migration"/>
    <property type="evidence" value="ECO:0000250"/>
    <property type="project" value="UniProtKB"/>
</dbReference>
<dbReference type="GO" id="GO:0090521">
    <property type="term" value="P:podocyte cell migration"/>
    <property type="evidence" value="ECO:0000250"/>
    <property type="project" value="UniProtKB"/>
</dbReference>
<dbReference type="GO" id="GO:0040038">
    <property type="term" value="P:polar body extrusion after meiotic divisions"/>
    <property type="evidence" value="ECO:0000315"/>
    <property type="project" value="AgBase"/>
</dbReference>
<dbReference type="GO" id="GO:1903431">
    <property type="term" value="P:positive regulation of cell maturation"/>
    <property type="evidence" value="ECO:0000315"/>
    <property type="project" value="AgBase"/>
</dbReference>
<dbReference type="GO" id="GO:0051894">
    <property type="term" value="P:positive regulation of focal adhesion assembly"/>
    <property type="evidence" value="ECO:0000250"/>
    <property type="project" value="UniProtKB"/>
</dbReference>
<dbReference type="GO" id="GO:0032956">
    <property type="term" value="P:regulation of actin cytoskeleton organization"/>
    <property type="evidence" value="ECO:0000250"/>
    <property type="project" value="UniProtKB"/>
</dbReference>
<dbReference type="GO" id="GO:1901888">
    <property type="term" value="P:regulation of cell junction assembly"/>
    <property type="evidence" value="ECO:0000318"/>
    <property type="project" value="GO_Central"/>
</dbReference>
<dbReference type="GO" id="GO:0030334">
    <property type="term" value="P:regulation of cell migration"/>
    <property type="evidence" value="ECO:0000250"/>
    <property type="project" value="UniProtKB"/>
</dbReference>
<dbReference type="GO" id="GO:0070507">
    <property type="term" value="P:regulation of microtubule cytoskeleton organization"/>
    <property type="evidence" value="ECO:0000250"/>
    <property type="project" value="UniProtKB"/>
</dbReference>
<dbReference type="GO" id="GO:0007266">
    <property type="term" value="P:Rho protein signal transduction"/>
    <property type="evidence" value="ECO:0000315"/>
    <property type="project" value="AgBase"/>
</dbReference>
<dbReference type="FunFam" id="1.20.5.730:FF:000001">
    <property type="entry name" value="rho-associated protein kinase 2"/>
    <property type="match status" value="1"/>
</dbReference>
<dbReference type="Gene3D" id="1.20.5.340">
    <property type="match status" value="1"/>
</dbReference>
<dbReference type="Gene3D" id="1.20.5.730">
    <property type="entry name" value="Single helix bin"/>
    <property type="match status" value="1"/>
</dbReference>
<dbReference type="InterPro" id="IPR050839">
    <property type="entry name" value="Rho-assoc_Ser/Thr_Kinase"/>
</dbReference>
<dbReference type="InterPro" id="IPR015008">
    <property type="entry name" value="ROCK_Rho-bd_dom"/>
</dbReference>
<dbReference type="PANTHER" id="PTHR22988">
    <property type="entry name" value="MYOTONIC DYSTROPHY S/T KINASE-RELATED"/>
    <property type="match status" value="1"/>
</dbReference>
<dbReference type="PANTHER" id="PTHR22988:SF33">
    <property type="entry name" value="RHO-ASSOCIATED PROTEIN KINASE 1"/>
    <property type="match status" value="1"/>
</dbReference>
<dbReference type="Pfam" id="PF08912">
    <property type="entry name" value="Rho_Binding"/>
    <property type="match status" value="1"/>
</dbReference>
<dbReference type="SUPFAM" id="SSF103652">
    <property type="entry name" value="G protein-binding domain"/>
    <property type="match status" value="1"/>
</dbReference>
<dbReference type="PROSITE" id="PS51859">
    <property type="entry name" value="RHO_BD"/>
    <property type="match status" value="1"/>
</dbReference>
<reference key="1">
    <citation type="journal article" date="2002" name="J. Cell Biol.">
        <title>The Rho-associated protein kinase p160ROCK is required for centrosome positioning.</title>
        <authorList>
            <person name="Chevrier V."/>
            <person name="Piel M."/>
            <person name="Collomb N."/>
            <person name="Saoudi Y."/>
            <person name="Frank R."/>
            <person name="Paintrand M."/>
            <person name="Narumiya S."/>
            <person name="Bornens M."/>
            <person name="Job D."/>
        </authorList>
    </citation>
    <scope>NUCLEOTIDE SEQUENCE [MRNA]</scope>
    <scope>FUNCTION</scope>
    <scope>SUBCELLULAR LOCATION</scope>
    <source>
        <tissue>Kidney</tissue>
    </source>
</reference>
<reference key="2">
    <citation type="journal article" date="1997" name="J. Biol. Chem.">
        <title>Phosphorylation of glial fibrillary acidic protein at the same sites by cleavage furrow kinase and Rho-associated kinase.</title>
        <authorList>
            <person name="Kosako H."/>
            <person name="Amano M."/>
            <person name="Yanagida M."/>
            <person name="Tanabe K."/>
            <person name="Nishi Y."/>
            <person name="Kaibuchi K."/>
            <person name="Inagaki M."/>
        </authorList>
    </citation>
    <scope>FUNCTION</scope>
</reference>
<reference key="3">
    <citation type="journal article" date="1997" name="Nature">
        <title>Calcium sensitization of smooth muscle mediated by a Rho-associated protein kinase in hypertension.</title>
        <authorList>
            <person name="Uehata M."/>
            <person name="Ishizaki T."/>
            <person name="Satoh H."/>
            <person name="Ono T."/>
            <person name="Kawahara T."/>
            <person name="Morishita T."/>
            <person name="Tamakawa H."/>
            <person name="Yamagami K."/>
            <person name="Inui J."/>
            <person name="Maekawa M."/>
            <person name="Narumiya S."/>
        </authorList>
    </citation>
    <scope>PARTIAL PROTEIN SEQUENCE</scope>
    <scope>INHIBITION BY Y-27632</scope>
    <scope>FUNCTION</scope>
</reference>
<proteinExistence type="evidence at protein level"/>
<name>ROCK1_BOVIN</name>
<evidence type="ECO:0000250" key="1"/>
<evidence type="ECO:0000250" key="2">
    <source>
        <dbReference type="UniProtKB" id="P70335"/>
    </source>
</evidence>
<evidence type="ECO:0000250" key="3">
    <source>
        <dbReference type="UniProtKB" id="Q13464"/>
    </source>
</evidence>
<evidence type="ECO:0000255" key="4"/>
<evidence type="ECO:0000255" key="5">
    <source>
        <dbReference type="PROSITE-ProRule" id="PRU01206"/>
    </source>
</evidence>
<evidence type="ECO:0000269" key="6">
    <source>
    </source>
</evidence>
<evidence type="ECO:0000269" key="7">
    <source>
    </source>
</evidence>
<evidence type="ECO:0000269" key="8">
    <source>
    </source>
</evidence>
<evidence type="ECO:0000305" key="9"/>
<comment type="function">
    <text evidence="2 3 6 7 8">Protein kinase which is a key regulator of the actin cytoskeleton and cell polarity (PubMed:9099667, PubMed:9353125). Involved in regulation of smooth muscle contraction, actin cytoskeleton organization, stress fiber and focal adhesion formation, neurite retraction, cell adhesion and motility via phosphorylation of DAPK3, GFAP, LIMK1, LIMK2, MYL9/MLC2, TPPP, PFN1 and PPP1R12A (PubMed:9099667, PubMed:9353125). Phosphorylates FHOD1 and acts synergistically with it to promote SRC-dependent non-apoptotic plasma membrane blebbing. Phosphorylates JIP3 and regulates the recruitment of JNK to JIP3 upon UVB-induced stress (By similarity). Acts as a suppressor of inflammatory cell migration by regulating PTEN phosphorylation and stability (By similarity). Acts as a negative regulator of VEGF-induced angiogenic endothelial cell activation. Required for centrosome positioning and centrosome-dependent exit from mitosis (PubMed:12034773). Plays a role in terminal erythroid differentiation (By similarity). Inhibits podocyte motility via regulation of actin cytoskeletal dynamics and phosphorylation of CFL1 (By similarity). Promotes keratinocyte terminal differentiation (By similarity). Involved in osteoblast compaction through the fibronectin fibrillogenesis cell-mediated matrix assembly process, essential for osteoblast mineralization (By similarity). May regulate closure of the eyelids and ventral body wall by inducing the assembly of actomyosin bundles (By similarity).</text>
</comment>
<comment type="catalytic activity">
    <reaction evidence="3">
        <text>L-seryl-[protein] + ATP = O-phospho-L-seryl-[protein] + ADP + H(+)</text>
        <dbReference type="Rhea" id="RHEA:17989"/>
        <dbReference type="Rhea" id="RHEA-COMP:9863"/>
        <dbReference type="Rhea" id="RHEA-COMP:11604"/>
        <dbReference type="ChEBI" id="CHEBI:15378"/>
        <dbReference type="ChEBI" id="CHEBI:29999"/>
        <dbReference type="ChEBI" id="CHEBI:30616"/>
        <dbReference type="ChEBI" id="CHEBI:83421"/>
        <dbReference type="ChEBI" id="CHEBI:456216"/>
        <dbReference type="EC" id="2.7.11.1"/>
    </reaction>
    <physiologicalReaction direction="left-to-right" evidence="3">
        <dbReference type="Rhea" id="RHEA:17990"/>
    </physiologicalReaction>
</comment>
<comment type="catalytic activity">
    <reaction evidence="3">
        <text>L-threonyl-[protein] + ATP = O-phospho-L-threonyl-[protein] + ADP + H(+)</text>
        <dbReference type="Rhea" id="RHEA:46608"/>
        <dbReference type="Rhea" id="RHEA-COMP:11060"/>
        <dbReference type="Rhea" id="RHEA-COMP:11605"/>
        <dbReference type="ChEBI" id="CHEBI:15378"/>
        <dbReference type="ChEBI" id="CHEBI:30013"/>
        <dbReference type="ChEBI" id="CHEBI:30616"/>
        <dbReference type="ChEBI" id="CHEBI:61977"/>
        <dbReference type="ChEBI" id="CHEBI:456216"/>
        <dbReference type="EC" id="2.7.11.1"/>
    </reaction>
    <physiologicalReaction direction="left-to-right" evidence="3">
        <dbReference type="Rhea" id="RHEA:46609"/>
    </physiologicalReaction>
</comment>
<comment type="cofactor">
    <cofactor evidence="1">
        <name>Mg(2+)</name>
        <dbReference type="ChEBI" id="CHEBI:18420"/>
    </cofactor>
</comment>
<comment type="activity regulation">
    <text evidence="1 8">Activated by RHOA binding (By similarity). Inhibited by Y-27632.</text>
</comment>
<comment type="subunit">
    <text evidence="1 3">Homodimer. Interacts with RHOA (activated by GTP), RHOB, RHOC, GEM, MYLC2B, RHOE, PPP1R12A, LIMK1, LIMK2, TSG101, CHORDC1, DAPK3, PFN1, PTEN and JIP3. Interacts with FHOD1 in a Src-dependent manner. Interacts with ITGB1BP1 (via N-terminus and PTB domain). Interacts with SHROOM3 (By similarity).</text>
</comment>
<comment type="subcellular location">
    <subcellularLocation>
        <location evidence="6">Cytoplasm</location>
    </subcellularLocation>
    <subcellularLocation>
        <location evidence="2">Golgi apparatus membrane</location>
        <topology evidence="2">Peripheral membrane protein</topology>
    </subcellularLocation>
    <subcellularLocation>
        <location evidence="6">Cytoplasm</location>
        <location evidence="6">Cytoskeleton</location>
        <location evidence="6">Microtubule organizing center</location>
        <location evidence="6">Centrosome</location>
        <location evidence="6">Centriole</location>
    </subcellularLocation>
    <subcellularLocation>
        <location evidence="2">Cell projection</location>
        <location evidence="2">Bleb</location>
    </subcellularLocation>
    <subcellularLocation>
        <location evidence="2">Cytoplasm</location>
        <location evidence="2">Cytoskeleton</location>
    </subcellularLocation>
    <subcellularLocation>
        <location evidence="2">Cell membrane</location>
    </subcellularLocation>
    <subcellularLocation>
        <location evidence="2">Cell projection</location>
        <location evidence="2">Lamellipodium</location>
    </subcellularLocation>
    <subcellularLocation>
        <location evidence="2">Cell projection</location>
        <location evidence="2">Ruffle</location>
    </subcellularLocation>
    <text evidence="2">A small proportion is associated with Golgi membranes (By similarity). Associated with the mother centriole and an intercentriolar linker (By similarity). Colocalizes with ITGB1BP1 and ITGB1 at the cell membrane predominantly in lamellipodia and membrane ruffles, but also in retraction fibers (By similarity). Localizes at the cell membrane in an ITGB1BP1-dependent manner (By similarity).</text>
</comment>
<comment type="similarity">
    <text evidence="9">Belongs to the protein kinase superfamily. AGC Ser/Thr protein kinase family.</text>
</comment>
<gene>
    <name type="primary">ROCK1</name>
</gene>